<protein>
    <recommendedName>
        <fullName>Solute carrier family 25 member 33</fullName>
    </recommendedName>
</protein>
<name>S2533_DANRE</name>
<keyword id="KW-0472">Membrane</keyword>
<keyword id="KW-0496">Mitochondrion</keyword>
<keyword id="KW-0999">Mitochondrion inner membrane</keyword>
<keyword id="KW-1185">Reference proteome</keyword>
<keyword id="KW-0677">Repeat</keyword>
<keyword id="KW-0812">Transmembrane</keyword>
<keyword id="KW-1133">Transmembrane helix</keyword>
<keyword id="KW-0813">Transport</keyword>
<comment type="function">
    <text evidence="1">Mitochondrial transporter that imports/exports pyrimidine nucleotides into and from mitochondria which participates in dendritic cell endocytosis.</text>
</comment>
<comment type="subcellular location">
    <subcellularLocation>
        <location evidence="1">Mitochondrion inner membrane</location>
        <topology evidence="2">Multi-pass membrane protein</topology>
    </subcellularLocation>
</comment>
<comment type="similarity">
    <text evidence="3">Belongs to the mitochondrial carrier (TC 2.A.29) family.</text>
</comment>
<feature type="chain" id="PRO_0000291787" description="Solute carrier family 25 member 33">
    <location>
        <begin position="1"/>
        <end position="314"/>
    </location>
</feature>
<feature type="transmembrane region" description="Helical; Name=1" evidence="2">
    <location>
        <begin position="7"/>
        <end position="27"/>
    </location>
</feature>
<feature type="transmembrane region" description="Helical; Name=2" evidence="2">
    <location>
        <begin position="44"/>
        <end position="58"/>
    </location>
</feature>
<feature type="transmembrane region" description="Helical; Name=3" evidence="2">
    <location>
        <begin position="114"/>
        <end position="134"/>
    </location>
</feature>
<feature type="transmembrane region" description="Helical; Name=4" evidence="2">
    <location>
        <begin position="183"/>
        <end position="203"/>
    </location>
</feature>
<feature type="transmembrane region" description="Helical; Name=5" evidence="2">
    <location>
        <begin position="226"/>
        <end position="246"/>
    </location>
</feature>
<feature type="transmembrane region" description="Helical; Name=6" evidence="2">
    <location>
        <begin position="291"/>
        <end position="311"/>
    </location>
</feature>
<feature type="repeat" description="Solcar 1">
    <location>
        <begin position="4"/>
        <end position="111"/>
    </location>
</feature>
<feature type="repeat" description="Solcar 2">
    <location>
        <begin position="119"/>
        <end position="206"/>
    </location>
</feature>
<feature type="repeat" description="Solcar 3">
    <location>
        <begin position="224"/>
        <end position="308"/>
    </location>
</feature>
<evidence type="ECO:0000250" key="1">
    <source>
        <dbReference type="UniProtKB" id="Q9BSK2"/>
    </source>
</evidence>
<evidence type="ECO:0000255" key="2"/>
<evidence type="ECO:0000305" key="3"/>
<organism>
    <name type="scientific">Danio rerio</name>
    <name type="common">Zebrafish</name>
    <name type="synonym">Brachydanio rerio</name>
    <dbReference type="NCBI Taxonomy" id="7955"/>
    <lineage>
        <taxon>Eukaryota</taxon>
        <taxon>Metazoa</taxon>
        <taxon>Chordata</taxon>
        <taxon>Craniata</taxon>
        <taxon>Vertebrata</taxon>
        <taxon>Euteleostomi</taxon>
        <taxon>Actinopterygii</taxon>
        <taxon>Neopterygii</taxon>
        <taxon>Teleostei</taxon>
        <taxon>Ostariophysi</taxon>
        <taxon>Cypriniformes</taxon>
        <taxon>Danionidae</taxon>
        <taxon>Danioninae</taxon>
        <taxon>Danio</taxon>
    </lineage>
</organism>
<sequence>MAQKDTLLHLFAGGCGGTVGAIMTCPLEVLKTRLQSSGLTLRPVFQVQLGTLNGAGVIRPGSVTPGLLQVLRSILEKEGPRSLFRGLGPNLVGVAPSRAIYFAAYSKSKETFNGIFVPNSGVVHMSSAGFAAFITNSLMNPIWMVKTRMQLEKKARGEKKMNALQCARYVYKTEGMRGFYRGLTASYAGISETMICFLIYETLKKYLAQSRFTTPDTDNDKGASDFLGLMFAAAFAKGCASCIAYPHEVIRTRLREEGSKYKYFFQTARLVAVEEGYAAFYRGLIPQLIRQIPNTAIVLSTYELIVHLLAEPSK</sequence>
<gene>
    <name type="primary">slc25a33</name>
    <name type="ORF">zgc:65787</name>
</gene>
<proteinExistence type="evidence at transcript level"/>
<dbReference type="EMBL" id="BC065854">
    <property type="protein sequence ID" value="AAH65854.1"/>
    <property type="molecule type" value="mRNA"/>
</dbReference>
<dbReference type="EMBL" id="BC056716">
    <property type="protein sequence ID" value="AAH56716.1"/>
    <property type="molecule type" value="mRNA"/>
</dbReference>
<dbReference type="RefSeq" id="NP_998322.1">
    <property type="nucleotide sequence ID" value="NM_213157.1"/>
</dbReference>
<dbReference type="SMR" id="Q6P036"/>
<dbReference type="FunCoup" id="Q6P036">
    <property type="interactions" value="1913"/>
</dbReference>
<dbReference type="STRING" id="7955.ENSDARP00000058406"/>
<dbReference type="PaxDb" id="7955-ENSDARP00000058406"/>
<dbReference type="Ensembl" id="ENSDART00000058407">
    <property type="protein sequence ID" value="ENSDARP00000058406"/>
    <property type="gene ID" value="ENSDARG00000039931"/>
</dbReference>
<dbReference type="GeneID" id="406436"/>
<dbReference type="KEGG" id="dre:406436"/>
<dbReference type="AGR" id="ZFIN:ZDB-GENE-040426-2183"/>
<dbReference type="CTD" id="84275"/>
<dbReference type="ZFIN" id="ZDB-GENE-040426-2183">
    <property type="gene designation" value="slc25a33"/>
</dbReference>
<dbReference type="eggNOG" id="KOG0757">
    <property type="taxonomic scope" value="Eukaryota"/>
</dbReference>
<dbReference type="HOGENOM" id="CLU_015166_6_0_1"/>
<dbReference type="InParanoid" id="Q6P036"/>
<dbReference type="OMA" id="AFYNGMG"/>
<dbReference type="OrthoDB" id="269120at2759"/>
<dbReference type="PhylomeDB" id="Q6P036"/>
<dbReference type="TreeFam" id="TF314220"/>
<dbReference type="PRO" id="PR:Q6P036"/>
<dbReference type="Proteomes" id="UP000000437">
    <property type="component" value="Chromosome 23"/>
</dbReference>
<dbReference type="Bgee" id="ENSDARG00000039931">
    <property type="expression patterns" value="Expressed in cleaving embryo and 33 other cell types or tissues"/>
</dbReference>
<dbReference type="GO" id="GO:0005743">
    <property type="term" value="C:mitochondrial inner membrane"/>
    <property type="evidence" value="ECO:0007669"/>
    <property type="project" value="UniProtKB-SubCell"/>
</dbReference>
<dbReference type="GO" id="GO:0005739">
    <property type="term" value="C:mitochondrion"/>
    <property type="evidence" value="ECO:0000318"/>
    <property type="project" value="GO_Central"/>
</dbReference>
<dbReference type="GO" id="GO:0015218">
    <property type="term" value="F:pyrimidine nucleotide transmembrane transporter activity"/>
    <property type="evidence" value="ECO:0000318"/>
    <property type="project" value="GO_Central"/>
</dbReference>
<dbReference type="GO" id="GO:0000002">
    <property type="term" value="P:mitochondrial genome maintenance"/>
    <property type="evidence" value="ECO:0000318"/>
    <property type="project" value="GO_Central"/>
</dbReference>
<dbReference type="GO" id="GO:1990519">
    <property type="term" value="P:pyrimidine nucleotide import into mitochondrion"/>
    <property type="evidence" value="ECO:0000318"/>
    <property type="project" value="GO_Central"/>
</dbReference>
<dbReference type="FunFam" id="1.50.40.10:FF:000028">
    <property type="entry name" value="Solute carrier family 25 member 33"/>
    <property type="match status" value="1"/>
</dbReference>
<dbReference type="FunFam" id="1.50.40.10:FF:000032">
    <property type="entry name" value="Solute carrier family 25 member 33"/>
    <property type="match status" value="1"/>
</dbReference>
<dbReference type="Gene3D" id="1.50.40.10">
    <property type="entry name" value="Mitochondrial carrier domain"/>
    <property type="match status" value="2"/>
</dbReference>
<dbReference type="InterPro" id="IPR002067">
    <property type="entry name" value="Mit_carrier"/>
</dbReference>
<dbReference type="InterPro" id="IPR018108">
    <property type="entry name" value="Mitochondrial_sb/sol_carrier"/>
</dbReference>
<dbReference type="InterPro" id="IPR023395">
    <property type="entry name" value="Mt_carrier_dom_sf"/>
</dbReference>
<dbReference type="InterPro" id="IPR049562">
    <property type="entry name" value="SLC25A33/36-like"/>
</dbReference>
<dbReference type="PANTHER" id="PTHR45829">
    <property type="entry name" value="MITOCHONDRIAL CARRIER PROTEIN RIM2"/>
    <property type="match status" value="1"/>
</dbReference>
<dbReference type="PANTHER" id="PTHR45829:SF5">
    <property type="entry name" value="SOLUTE CARRIER FAMILY 25 MEMBER 33"/>
    <property type="match status" value="1"/>
</dbReference>
<dbReference type="Pfam" id="PF00153">
    <property type="entry name" value="Mito_carr"/>
    <property type="match status" value="3"/>
</dbReference>
<dbReference type="PRINTS" id="PR00926">
    <property type="entry name" value="MITOCARRIER"/>
</dbReference>
<dbReference type="SUPFAM" id="SSF103506">
    <property type="entry name" value="Mitochondrial carrier"/>
    <property type="match status" value="1"/>
</dbReference>
<dbReference type="PROSITE" id="PS50920">
    <property type="entry name" value="SOLCAR"/>
    <property type="match status" value="3"/>
</dbReference>
<accession>Q6P036</accession>
<reference key="1">
    <citation type="submission" date="2004-01" db="EMBL/GenBank/DDBJ databases">
        <authorList>
            <consortium name="NIH - Zebrafish Gene Collection (ZGC) project"/>
        </authorList>
    </citation>
    <scope>NUCLEOTIDE SEQUENCE [LARGE SCALE MRNA]</scope>
</reference>